<keyword id="KW-0025">Alternative splicing</keyword>
<keyword id="KW-0129">CBS domain</keyword>
<keyword id="KW-0472">Membrane</keyword>
<keyword id="KW-0597">Phosphoprotein</keyword>
<keyword id="KW-1185">Reference proteome</keyword>
<keyword id="KW-0677">Repeat</keyword>
<keyword id="KW-0812">Transmembrane</keyword>
<keyword id="KW-1133">Transmembrane helix</keyword>
<organism>
    <name type="scientific">Arabidopsis thaliana</name>
    <name type="common">Mouse-ear cress</name>
    <dbReference type="NCBI Taxonomy" id="3702"/>
    <lineage>
        <taxon>Eukaryota</taxon>
        <taxon>Viridiplantae</taxon>
        <taxon>Streptophyta</taxon>
        <taxon>Embryophyta</taxon>
        <taxon>Tracheophyta</taxon>
        <taxon>Spermatophyta</taxon>
        <taxon>Magnoliopsida</taxon>
        <taxon>eudicotyledons</taxon>
        <taxon>Gunneridae</taxon>
        <taxon>Pentapetalae</taxon>
        <taxon>rosids</taxon>
        <taxon>malvids</taxon>
        <taxon>Brassicales</taxon>
        <taxon>Brassicaceae</taxon>
        <taxon>Camelineae</taxon>
        <taxon>Arabidopsis</taxon>
    </lineage>
</organism>
<protein>
    <recommendedName>
        <fullName>CBS domain-containing protein CBSCBSPB4</fullName>
    </recommendedName>
</protein>
<name>Y5053_ARATH</name>
<evidence type="ECO:0000255" key="1"/>
<evidence type="ECO:0000255" key="2">
    <source>
        <dbReference type="PROSITE-ProRule" id="PRU00703"/>
    </source>
</evidence>
<evidence type="ECO:0000255" key="3">
    <source>
        <dbReference type="PROSITE-ProRule" id="PRU01081"/>
    </source>
</evidence>
<evidence type="ECO:0000256" key="4">
    <source>
        <dbReference type="SAM" id="MobiDB-lite"/>
    </source>
</evidence>
<evidence type="ECO:0000303" key="5">
    <source>
    </source>
</evidence>
<evidence type="ECO:0000303" key="6">
    <source ref="4"/>
</evidence>
<evidence type="ECO:0000305" key="7"/>
<evidence type="ECO:0007744" key="8">
    <source>
    </source>
</evidence>
<proteinExistence type="evidence at protein level"/>
<feature type="chain" id="PRO_0000412230" description="CBS domain-containing protein CBSCBSPB4">
    <location>
        <begin position="1"/>
        <end position="548"/>
    </location>
</feature>
<feature type="transmembrane region" description="Helical" evidence="1">
    <location>
        <begin position="521"/>
        <end position="543"/>
    </location>
</feature>
<feature type="domain" description="CBS 1" evidence="2">
    <location>
        <begin position="63"/>
        <end position="126"/>
    </location>
</feature>
<feature type="domain" description="CBS 2" evidence="2">
    <location>
        <begin position="133"/>
        <end position="190"/>
    </location>
</feature>
<feature type="domain" description="CBS 3" evidence="2">
    <location>
        <begin position="233"/>
        <end position="293"/>
    </location>
</feature>
<feature type="domain" description="CBS 4" evidence="2">
    <location>
        <begin position="301"/>
        <end position="358"/>
    </location>
</feature>
<feature type="domain" description="PB1" evidence="3">
    <location>
        <begin position="411"/>
        <end position="498"/>
    </location>
</feature>
<feature type="region of interest" description="Disordered" evidence="4">
    <location>
        <begin position="1"/>
        <end position="58"/>
    </location>
</feature>
<feature type="compositionally biased region" description="Polar residues" evidence="4">
    <location>
        <begin position="1"/>
        <end position="18"/>
    </location>
</feature>
<feature type="compositionally biased region" description="Low complexity" evidence="4">
    <location>
        <begin position="37"/>
        <end position="56"/>
    </location>
</feature>
<feature type="modified residue" description="Phosphoserine" evidence="8">
    <location>
        <position position="18"/>
    </location>
</feature>
<feature type="splice variant" id="VSP_041669" description="In isoform 2." evidence="5 6">
    <location>
        <begin position="1"/>
        <end position="253"/>
    </location>
</feature>
<feature type="sequence conflict" description="In Ref. 3; BAC42522." evidence="7" ref="3">
    <original>S</original>
    <variation>G</variation>
    <location>
        <position position="262"/>
    </location>
</feature>
<gene>
    <name type="primary">CBSCBSPB4</name>
    <name type="ordered locus">At5g50530</name>
    <name type="ORF">MBA10.9</name>
</gene>
<sequence length="548" mass="59812">MANQGGPSRKSLSFSGHSFQGRKKASENEGGGGGGSDLLPRRSLTSSRSSISLSGERSGERTVKRLRLCKALTVPDSTTLFEACRRMAARRVDALLLTDSNALLCGILTDRDIATKVIAKQLNLEETPVSKVMTKNPVFVLSDTIAVEALQKMVQGKFRHLPVVENGEVIALLDIAKCLYDAIARMERSVEKGKAIAAAVEGVEKNWGTSIAGPNTFMETLRERIFKPSLSTIIPENTKVLKVGLDETVLGVTMKMVEYQSSAAMVMVENKLVGILTSKDILMRVISQNLPQETTTVEKVMTPNPESATVDMAIVEALHIMHNGKFLHLPVLDKDGDVVAVIDVIHITHAAVTTAGSTAGINNETANSMMQKFWDSAMALSPNEDGDETRSEEESMKLSSEIEVTKSFSYPNTFAFKLQDKKGRMHRFMCETQSLTTLITAILQRMGDDIEPDNLPQIMYEDEDNDKVVLASDNDLGAAVEHAKSIGWKGLKLHLDYTEERGHRRGLSSEDMDYDQSNSWAAAYKTVAAGAALAAGLGVLVYLKRNSN</sequence>
<comment type="subcellular location">
    <subcellularLocation>
        <location evidence="7">Membrane</location>
        <topology evidence="7">Single-pass membrane protein</topology>
    </subcellularLocation>
</comment>
<comment type="alternative products">
    <event type="alternative splicing"/>
    <isoform>
        <id>Q0WLC7-1</id>
        <name>1</name>
        <sequence type="displayed"/>
    </isoform>
    <isoform>
        <id>Q0WLC7-2</id>
        <name>2</name>
        <sequence type="described" ref="VSP_041669"/>
    </isoform>
</comment>
<accession>Q0WLC7</accession>
<accession>Q8GY40</accession>
<accession>Q9LUF7</accession>
<dbReference type="EMBL" id="AB025619">
    <property type="protein sequence ID" value="BAB09138.1"/>
    <property type="molecule type" value="Genomic_DNA"/>
</dbReference>
<dbReference type="EMBL" id="CP002688">
    <property type="protein sequence ID" value="AED95955.1"/>
    <property type="molecule type" value="Genomic_DNA"/>
</dbReference>
<dbReference type="EMBL" id="AK117882">
    <property type="protein sequence ID" value="BAC42522.1"/>
    <property type="molecule type" value="mRNA"/>
</dbReference>
<dbReference type="EMBL" id="AK230278">
    <property type="protein sequence ID" value="BAF02080.1"/>
    <property type="molecule type" value="mRNA"/>
</dbReference>
<dbReference type="RefSeq" id="NP_568736.1">
    <molecule id="Q0WLC7-1"/>
    <property type="nucleotide sequence ID" value="NM_124440.3"/>
</dbReference>
<dbReference type="RefSeq" id="NP_680412.1">
    <molecule id="Q0WLC7-1"/>
    <property type="nucleotide sequence ID" value="NM_148107.2"/>
</dbReference>
<dbReference type="SMR" id="Q0WLC7"/>
<dbReference type="FunCoup" id="Q0WLC7">
    <property type="interactions" value="7"/>
</dbReference>
<dbReference type="STRING" id="3702.Q0WLC7"/>
<dbReference type="iPTMnet" id="Q0WLC7"/>
<dbReference type="PaxDb" id="3702-AT5G50530.1"/>
<dbReference type="EnsemblPlants" id="AT5G50530.1">
    <molecule id="Q0WLC7-1"/>
    <property type="protein sequence ID" value="AT5G50530.1"/>
    <property type="gene ID" value="AT5G50530"/>
</dbReference>
<dbReference type="EnsemblPlants" id="AT5G50640.1">
    <molecule id="Q0WLC7-1"/>
    <property type="protein sequence ID" value="AT5G50640.1"/>
    <property type="gene ID" value="AT5G50640"/>
</dbReference>
<dbReference type="GeneID" id="835121"/>
<dbReference type="Gramene" id="AT5G50530.1">
    <molecule id="Q0WLC7-1"/>
    <property type="protein sequence ID" value="AT5G50530.1"/>
    <property type="gene ID" value="AT5G50530"/>
</dbReference>
<dbReference type="Gramene" id="AT5G50640.1">
    <molecule id="Q0WLC7-1"/>
    <property type="protein sequence ID" value="AT5G50640.1"/>
    <property type="gene ID" value="AT5G50640"/>
</dbReference>
<dbReference type="KEGG" id="ath:AT5G50530"/>
<dbReference type="KEGG" id="ath:AT5G50640"/>
<dbReference type="Araport" id="AT5G50530"/>
<dbReference type="TAIR" id="AT5G50530"/>
<dbReference type="eggNOG" id="ENOG502QVK2">
    <property type="taxonomic scope" value="Eukaryota"/>
</dbReference>
<dbReference type="HOGENOM" id="CLU_009026_3_0_1"/>
<dbReference type="InParanoid" id="Q0WLC7"/>
<dbReference type="OMA" id="HIMYEDE"/>
<dbReference type="OrthoDB" id="418595at2759"/>
<dbReference type="PhylomeDB" id="Q0WLC7"/>
<dbReference type="PRO" id="PR:Q0WLC7"/>
<dbReference type="Proteomes" id="UP000006548">
    <property type="component" value="Chromosome 5"/>
</dbReference>
<dbReference type="ExpressionAtlas" id="Q0WLC7">
    <property type="expression patterns" value="baseline and differential"/>
</dbReference>
<dbReference type="GO" id="GO:0016020">
    <property type="term" value="C:membrane"/>
    <property type="evidence" value="ECO:0007669"/>
    <property type="project" value="UniProtKB-SubCell"/>
</dbReference>
<dbReference type="GO" id="GO:0009536">
    <property type="term" value="C:plastid"/>
    <property type="evidence" value="ECO:0007005"/>
    <property type="project" value="TAIR"/>
</dbReference>
<dbReference type="CDD" id="cd17781">
    <property type="entry name" value="CBS_pair_MUG70_1"/>
    <property type="match status" value="1"/>
</dbReference>
<dbReference type="CDD" id="cd17782">
    <property type="entry name" value="CBS_pair_MUG70_2"/>
    <property type="match status" value="1"/>
</dbReference>
<dbReference type="CDD" id="cd06409">
    <property type="entry name" value="PB1_MUG70"/>
    <property type="match status" value="1"/>
</dbReference>
<dbReference type="Gene3D" id="3.10.580.10">
    <property type="entry name" value="CBS-domain"/>
    <property type="match status" value="2"/>
</dbReference>
<dbReference type="Gene3D" id="3.10.20.90">
    <property type="entry name" value="Phosphatidylinositol 3-kinase Catalytic Subunit, Chain A, domain 1"/>
    <property type="match status" value="1"/>
</dbReference>
<dbReference type="InterPro" id="IPR050511">
    <property type="entry name" value="AMPK_gamma/SDS23_families"/>
</dbReference>
<dbReference type="InterPro" id="IPR000644">
    <property type="entry name" value="CBS_dom"/>
</dbReference>
<dbReference type="InterPro" id="IPR046342">
    <property type="entry name" value="CBS_dom_sf"/>
</dbReference>
<dbReference type="InterPro" id="IPR053793">
    <property type="entry name" value="PB1-like"/>
</dbReference>
<dbReference type="InterPro" id="IPR000270">
    <property type="entry name" value="PB1_dom"/>
</dbReference>
<dbReference type="PANTHER" id="PTHR13780">
    <property type="entry name" value="AMP-ACTIVATED PROTEIN KINASE, GAMMA REGULATORY SUBUNIT"/>
    <property type="match status" value="1"/>
</dbReference>
<dbReference type="PANTHER" id="PTHR13780:SF160">
    <property type="entry name" value="CBS DOMAIN-CONTAINING PROTEIN CBSCBSPB4-RELATED"/>
    <property type="match status" value="1"/>
</dbReference>
<dbReference type="Pfam" id="PF00571">
    <property type="entry name" value="CBS"/>
    <property type="match status" value="4"/>
</dbReference>
<dbReference type="Pfam" id="PF00564">
    <property type="entry name" value="PB1"/>
    <property type="match status" value="1"/>
</dbReference>
<dbReference type="SMART" id="SM00116">
    <property type="entry name" value="CBS"/>
    <property type="match status" value="4"/>
</dbReference>
<dbReference type="SMART" id="SM00666">
    <property type="entry name" value="PB1"/>
    <property type="match status" value="1"/>
</dbReference>
<dbReference type="SUPFAM" id="SSF54277">
    <property type="entry name" value="CAD &amp; PB1 domains"/>
    <property type="match status" value="1"/>
</dbReference>
<dbReference type="SUPFAM" id="SSF54631">
    <property type="entry name" value="CBS-domain pair"/>
    <property type="match status" value="2"/>
</dbReference>
<dbReference type="PROSITE" id="PS51371">
    <property type="entry name" value="CBS"/>
    <property type="match status" value="4"/>
</dbReference>
<dbReference type="PROSITE" id="PS51745">
    <property type="entry name" value="PB1"/>
    <property type="match status" value="1"/>
</dbReference>
<reference key="1">
    <citation type="submission" date="1999-04" db="EMBL/GenBank/DDBJ databases">
        <title>Structural analysis of Arabidopsis thaliana chromosome 5. XI.</title>
        <authorList>
            <person name="Kaneko T."/>
            <person name="Katoh T."/>
            <person name="Asamizu E."/>
            <person name="Sato S."/>
            <person name="Nakamura Y."/>
            <person name="Kotani H."/>
            <person name="Tabata S."/>
        </authorList>
    </citation>
    <scope>NUCLEOTIDE SEQUENCE [LARGE SCALE GENOMIC DNA]</scope>
    <source>
        <strain>cv. Columbia</strain>
    </source>
</reference>
<reference key="2">
    <citation type="journal article" date="2017" name="Plant J.">
        <title>Araport11: a complete reannotation of the Arabidopsis thaliana reference genome.</title>
        <authorList>
            <person name="Cheng C.Y."/>
            <person name="Krishnakumar V."/>
            <person name="Chan A.P."/>
            <person name="Thibaud-Nissen F."/>
            <person name="Schobel S."/>
            <person name="Town C.D."/>
        </authorList>
    </citation>
    <scope>GENOME REANNOTATION</scope>
    <source>
        <strain>cv. Columbia</strain>
    </source>
</reference>
<reference key="3">
    <citation type="journal article" date="2002" name="Science">
        <title>Functional annotation of a full-length Arabidopsis cDNA collection.</title>
        <authorList>
            <person name="Seki M."/>
            <person name="Narusaka M."/>
            <person name="Kamiya A."/>
            <person name="Ishida J."/>
            <person name="Satou M."/>
            <person name="Sakurai T."/>
            <person name="Nakajima M."/>
            <person name="Enju A."/>
            <person name="Akiyama K."/>
            <person name="Oono Y."/>
            <person name="Muramatsu M."/>
            <person name="Hayashizaki Y."/>
            <person name="Kawai J."/>
            <person name="Carninci P."/>
            <person name="Itoh M."/>
            <person name="Ishii Y."/>
            <person name="Arakawa T."/>
            <person name="Shibata K."/>
            <person name="Shinagawa A."/>
            <person name="Shinozaki K."/>
        </authorList>
    </citation>
    <scope>NUCLEOTIDE SEQUENCE [LARGE SCALE MRNA] (ISOFORM 2)</scope>
    <source>
        <strain>cv. Columbia</strain>
    </source>
</reference>
<reference key="4">
    <citation type="submission" date="2006-07" db="EMBL/GenBank/DDBJ databases">
        <title>Large-scale analysis of RIKEN Arabidopsis full-length (RAFL) cDNAs.</title>
        <authorList>
            <person name="Totoki Y."/>
            <person name="Seki M."/>
            <person name="Ishida J."/>
            <person name="Nakajima M."/>
            <person name="Enju A."/>
            <person name="Kamiya A."/>
            <person name="Narusaka M."/>
            <person name="Shin-i T."/>
            <person name="Nakagawa M."/>
            <person name="Sakamoto N."/>
            <person name="Oishi K."/>
            <person name="Kohara Y."/>
            <person name="Kobayashi M."/>
            <person name="Toyoda A."/>
            <person name="Sakaki Y."/>
            <person name="Sakurai T."/>
            <person name="Iida K."/>
            <person name="Akiyama K."/>
            <person name="Satou M."/>
            <person name="Toyoda T."/>
            <person name="Konagaya A."/>
            <person name="Carninci P."/>
            <person name="Kawai J."/>
            <person name="Hayashizaki Y."/>
            <person name="Shinozaki K."/>
        </authorList>
    </citation>
    <scope>NUCLEOTIDE SEQUENCE [LARGE SCALE MRNA] (ISOFORM 2)</scope>
    <source>
        <strain>cv. Columbia</strain>
    </source>
</reference>
<reference key="5">
    <citation type="journal article" date="2009" name="BMC Genomics">
        <title>Genome wide expression analysis of CBS domain containing proteins in Arabidopsis thaliana (L.) Heynh and Oryza sativa L. reveals their developmental and stress regulation.</title>
        <authorList>
            <person name="Kushwaha H.R."/>
            <person name="Singh A.K."/>
            <person name="Sopory S.K."/>
            <person name="Singla-Pareek S.L."/>
            <person name="Pareek A."/>
        </authorList>
    </citation>
    <scope>GENE FAMILY</scope>
    <scope>NOMENCLATURE</scope>
</reference>
<reference key="6">
    <citation type="journal article" date="2009" name="Plant Physiol.">
        <title>Large-scale Arabidopsis phosphoproteome profiling reveals novel chloroplast kinase substrates and phosphorylation networks.</title>
        <authorList>
            <person name="Reiland S."/>
            <person name="Messerli G."/>
            <person name="Baerenfaller K."/>
            <person name="Gerrits B."/>
            <person name="Endler A."/>
            <person name="Grossmann J."/>
            <person name="Gruissem W."/>
            <person name="Baginsky S."/>
        </authorList>
    </citation>
    <scope>PHOSPHORYLATION [LARGE SCALE ANALYSIS] AT SER-18</scope>
    <scope>IDENTIFICATION BY MASS SPECTROMETRY [LARGE SCALE ANALYSIS]</scope>
</reference>